<proteinExistence type="inferred from homology"/>
<organism>
    <name type="scientific">Lactobacillus gasseri (strain ATCC 33323 / DSM 20243 / BCRC 14619 / CIP 102991 / JCM 1131 / KCTC 3163 / NCIMB 11718 / NCTC 13722 / AM63)</name>
    <dbReference type="NCBI Taxonomy" id="324831"/>
    <lineage>
        <taxon>Bacteria</taxon>
        <taxon>Bacillati</taxon>
        <taxon>Bacillota</taxon>
        <taxon>Bacilli</taxon>
        <taxon>Lactobacillales</taxon>
        <taxon>Lactobacillaceae</taxon>
        <taxon>Lactobacillus</taxon>
    </lineage>
</organism>
<evidence type="ECO:0000255" key="1">
    <source>
        <dbReference type="HAMAP-Rule" id="MF_00337"/>
    </source>
</evidence>
<evidence type="ECO:0000256" key="2">
    <source>
        <dbReference type="SAM" id="MobiDB-lite"/>
    </source>
</evidence>
<comment type="function">
    <text evidence="1">Bidirectionally degrades single-stranded DNA into large acid-insoluble oligonucleotides, which are then degraded further into small acid-soluble oligonucleotides.</text>
</comment>
<comment type="catalytic activity">
    <reaction evidence="1">
        <text>Exonucleolytic cleavage in either 5'- to 3'- or 3'- to 5'-direction to yield nucleoside 5'-phosphates.</text>
        <dbReference type="EC" id="3.1.11.6"/>
    </reaction>
</comment>
<comment type="subunit">
    <text evidence="1">Heterooligomer composed of large and small subunits.</text>
</comment>
<comment type="subcellular location">
    <subcellularLocation>
        <location evidence="1">Cytoplasm</location>
    </subcellularLocation>
</comment>
<comment type="similarity">
    <text evidence="1">Belongs to the XseB family.</text>
</comment>
<dbReference type="EC" id="3.1.11.6" evidence="1"/>
<dbReference type="EMBL" id="CP000413">
    <property type="protein sequence ID" value="ABJ60144.1"/>
    <property type="molecule type" value="Genomic_DNA"/>
</dbReference>
<dbReference type="RefSeq" id="WP_003647535.1">
    <property type="nucleotide sequence ID" value="NZ_WBMG01000005.1"/>
</dbReference>
<dbReference type="SMR" id="Q044H8"/>
<dbReference type="KEGG" id="lga:LGAS_0753"/>
<dbReference type="HOGENOM" id="CLU_145918_3_2_9"/>
<dbReference type="BioCyc" id="LGAS324831:G1G6Y-747-MONOMER"/>
<dbReference type="Proteomes" id="UP000000664">
    <property type="component" value="Chromosome"/>
</dbReference>
<dbReference type="GO" id="GO:0005829">
    <property type="term" value="C:cytosol"/>
    <property type="evidence" value="ECO:0007669"/>
    <property type="project" value="TreeGrafter"/>
</dbReference>
<dbReference type="GO" id="GO:0009318">
    <property type="term" value="C:exodeoxyribonuclease VII complex"/>
    <property type="evidence" value="ECO:0007669"/>
    <property type="project" value="InterPro"/>
</dbReference>
<dbReference type="GO" id="GO:0008855">
    <property type="term" value="F:exodeoxyribonuclease VII activity"/>
    <property type="evidence" value="ECO:0007669"/>
    <property type="project" value="UniProtKB-UniRule"/>
</dbReference>
<dbReference type="GO" id="GO:0006308">
    <property type="term" value="P:DNA catabolic process"/>
    <property type="evidence" value="ECO:0007669"/>
    <property type="project" value="UniProtKB-UniRule"/>
</dbReference>
<dbReference type="Gene3D" id="1.10.287.1040">
    <property type="entry name" value="Exonuclease VII, small subunit"/>
    <property type="match status" value="1"/>
</dbReference>
<dbReference type="HAMAP" id="MF_00337">
    <property type="entry name" value="Exonuc_7_S"/>
    <property type="match status" value="1"/>
</dbReference>
<dbReference type="InterPro" id="IPR003761">
    <property type="entry name" value="Exonuc_VII_S"/>
</dbReference>
<dbReference type="InterPro" id="IPR037004">
    <property type="entry name" value="Exonuc_VII_ssu_sf"/>
</dbReference>
<dbReference type="NCBIfam" id="NF002138">
    <property type="entry name" value="PRK00977.1-2"/>
    <property type="match status" value="1"/>
</dbReference>
<dbReference type="NCBIfam" id="NF002140">
    <property type="entry name" value="PRK00977.1-4"/>
    <property type="match status" value="1"/>
</dbReference>
<dbReference type="NCBIfam" id="TIGR01280">
    <property type="entry name" value="xseB"/>
    <property type="match status" value="1"/>
</dbReference>
<dbReference type="PANTHER" id="PTHR34137">
    <property type="entry name" value="EXODEOXYRIBONUCLEASE 7 SMALL SUBUNIT"/>
    <property type="match status" value="1"/>
</dbReference>
<dbReference type="PANTHER" id="PTHR34137:SF1">
    <property type="entry name" value="EXODEOXYRIBONUCLEASE 7 SMALL SUBUNIT"/>
    <property type="match status" value="1"/>
</dbReference>
<dbReference type="Pfam" id="PF02609">
    <property type="entry name" value="Exonuc_VII_S"/>
    <property type="match status" value="1"/>
</dbReference>
<dbReference type="PIRSF" id="PIRSF006488">
    <property type="entry name" value="Exonuc_VII_S"/>
    <property type="match status" value="1"/>
</dbReference>
<dbReference type="SUPFAM" id="SSF116842">
    <property type="entry name" value="XseB-like"/>
    <property type="match status" value="1"/>
</dbReference>
<gene>
    <name evidence="1" type="primary">xseB</name>
    <name type="ordered locus">LGAS_0753</name>
</gene>
<feature type="chain" id="PRO_0000303716" description="Exodeoxyribonuclease 7 small subunit">
    <location>
        <begin position="1"/>
        <end position="81"/>
    </location>
</feature>
<feature type="region of interest" description="Disordered" evidence="2">
    <location>
        <begin position="59"/>
        <end position="81"/>
    </location>
</feature>
<feature type="compositionally biased region" description="Basic and acidic residues" evidence="2">
    <location>
        <begin position="60"/>
        <end position="70"/>
    </location>
</feature>
<feature type="compositionally biased region" description="Polar residues" evidence="2">
    <location>
        <begin position="71"/>
        <end position="81"/>
    </location>
</feature>
<sequence length="81" mass="9069">MATKKNNFEEQLNELQEIVNKLESGNVPLEDALNEFQAGVKLSRELEKKLNDAEQTVAKLVDKDGNEKTLDPQNASAPEEE</sequence>
<accession>Q044H8</accession>
<protein>
    <recommendedName>
        <fullName evidence="1">Exodeoxyribonuclease 7 small subunit</fullName>
        <ecNumber evidence="1">3.1.11.6</ecNumber>
    </recommendedName>
    <alternativeName>
        <fullName evidence="1">Exodeoxyribonuclease VII small subunit</fullName>
        <shortName evidence="1">Exonuclease VII small subunit</shortName>
    </alternativeName>
</protein>
<reference key="1">
    <citation type="journal article" date="2006" name="Proc. Natl. Acad. Sci. U.S.A.">
        <title>Comparative genomics of the lactic acid bacteria.</title>
        <authorList>
            <person name="Makarova K.S."/>
            <person name="Slesarev A."/>
            <person name="Wolf Y.I."/>
            <person name="Sorokin A."/>
            <person name="Mirkin B."/>
            <person name="Koonin E.V."/>
            <person name="Pavlov A."/>
            <person name="Pavlova N."/>
            <person name="Karamychev V."/>
            <person name="Polouchine N."/>
            <person name="Shakhova V."/>
            <person name="Grigoriev I."/>
            <person name="Lou Y."/>
            <person name="Rohksar D."/>
            <person name="Lucas S."/>
            <person name="Huang K."/>
            <person name="Goodstein D.M."/>
            <person name="Hawkins T."/>
            <person name="Plengvidhya V."/>
            <person name="Welker D."/>
            <person name="Hughes J."/>
            <person name="Goh Y."/>
            <person name="Benson A."/>
            <person name="Baldwin K."/>
            <person name="Lee J.-H."/>
            <person name="Diaz-Muniz I."/>
            <person name="Dosti B."/>
            <person name="Smeianov V."/>
            <person name="Wechter W."/>
            <person name="Barabote R."/>
            <person name="Lorca G."/>
            <person name="Altermann E."/>
            <person name="Barrangou R."/>
            <person name="Ganesan B."/>
            <person name="Xie Y."/>
            <person name="Rawsthorne H."/>
            <person name="Tamir D."/>
            <person name="Parker C."/>
            <person name="Breidt F."/>
            <person name="Broadbent J.R."/>
            <person name="Hutkins R."/>
            <person name="O'Sullivan D."/>
            <person name="Steele J."/>
            <person name="Unlu G."/>
            <person name="Saier M.H. Jr."/>
            <person name="Klaenhammer T."/>
            <person name="Richardson P."/>
            <person name="Kozyavkin S."/>
            <person name="Weimer B.C."/>
            <person name="Mills D.A."/>
        </authorList>
    </citation>
    <scope>NUCLEOTIDE SEQUENCE [LARGE SCALE GENOMIC DNA]</scope>
    <source>
        <strain>ATCC 33323 / DSM 20243 / BCRC 14619 / CIP 102991 / JCM 1131 / KCTC 3163 / NCIMB 11718 / NCTC 13722 / AM63</strain>
    </source>
</reference>
<keyword id="KW-0963">Cytoplasm</keyword>
<keyword id="KW-0269">Exonuclease</keyword>
<keyword id="KW-0378">Hydrolase</keyword>
<keyword id="KW-0540">Nuclease</keyword>
<name>EX7S_LACGA</name>